<feature type="chain" id="PRO_0000158920" description="Adenylate kinase 2, mitochondrial">
    <location>
        <begin position="1"/>
        <end position="239"/>
    </location>
</feature>
<feature type="region of interest" description="NMP" evidence="3">
    <location>
        <begin position="45"/>
        <end position="74"/>
    </location>
</feature>
<feature type="region of interest" description="LID" evidence="3">
    <location>
        <begin position="141"/>
        <end position="178"/>
    </location>
</feature>
<feature type="binding site" evidence="3">
    <location>
        <begin position="25"/>
        <end position="30"/>
    </location>
    <ligand>
        <name>ATP</name>
        <dbReference type="ChEBI" id="CHEBI:30616"/>
    </ligand>
</feature>
<feature type="binding site" evidence="3">
    <location>
        <position position="46"/>
    </location>
    <ligand>
        <name>AMP</name>
        <dbReference type="ChEBI" id="CHEBI:456215"/>
    </ligand>
</feature>
<feature type="binding site" evidence="3">
    <location>
        <position position="51"/>
    </location>
    <ligand>
        <name>AMP</name>
        <dbReference type="ChEBI" id="CHEBI:456215"/>
    </ligand>
</feature>
<feature type="binding site" evidence="3">
    <location>
        <begin position="72"/>
        <end position="74"/>
    </location>
    <ligand>
        <name>AMP</name>
        <dbReference type="ChEBI" id="CHEBI:456215"/>
    </ligand>
</feature>
<feature type="binding site" evidence="3">
    <location>
        <begin position="100"/>
        <end position="103"/>
    </location>
    <ligand>
        <name>AMP</name>
        <dbReference type="ChEBI" id="CHEBI:456215"/>
    </ligand>
</feature>
<feature type="binding site" evidence="3">
    <location>
        <position position="107"/>
    </location>
    <ligand>
        <name>AMP</name>
        <dbReference type="ChEBI" id="CHEBI:456215"/>
    </ligand>
</feature>
<feature type="binding site" evidence="3">
    <location>
        <position position="142"/>
    </location>
    <ligand>
        <name>ATP</name>
        <dbReference type="ChEBI" id="CHEBI:30616"/>
    </ligand>
</feature>
<feature type="binding site" evidence="3">
    <location>
        <begin position="151"/>
        <end position="152"/>
    </location>
    <ligand>
        <name>ATP</name>
        <dbReference type="ChEBI" id="CHEBI:30616"/>
    </ligand>
</feature>
<feature type="binding site" evidence="3">
    <location>
        <position position="175"/>
    </location>
    <ligand>
        <name>AMP</name>
        <dbReference type="ChEBI" id="CHEBI:456215"/>
    </ligand>
</feature>
<feature type="binding site" evidence="3">
    <location>
        <position position="186"/>
    </location>
    <ligand>
        <name>AMP</name>
        <dbReference type="ChEBI" id="CHEBI:456215"/>
    </ligand>
</feature>
<feature type="binding site" evidence="3">
    <location>
        <position position="214"/>
    </location>
    <ligand>
        <name>ATP</name>
        <dbReference type="ChEBI" id="CHEBI:30616"/>
    </ligand>
</feature>
<feature type="modified residue" description="N-acetylmethionine" evidence="1">
    <location>
        <position position="1"/>
    </location>
</feature>
<feature type="modified residue" description="Phosphoserine" evidence="1">
    <location>
        <position position="58"/>
    </location>
</feature>
<feature type="modified residue" description="N6-succinyllysine" evidence="2">
    <location>
        <position position="62"/>
    </location>
</feature>
<feature type="modified residue" description="Phosphoserine" evidence="2">
    <location>
        <position position="91"/>
    </location>
</feature>
<feature type="modified residue" description="N6-succinyllysine" evidence="2">
    <location>
        <position position="93"/>
    </location>
</feature>
<feature type="modified residue" description="Phosphoserine" evidence="1">
    <location>
        <position position="133"/>
    </location>
</feature>
<feature type="modified residue" description="N6-acetyllysine" evidence="2">
    <location>
        <position position="181"/>
    </location>
</feature>
<feature type="modified residue" description="Phosphothreonine" evidence="1">
    <location>
        <position position="195"/>
    </location>
</feature>
<feature type="disulfide bond" evidence="3">
    <location>
        <begin position="42"/>
        <end position="92"/>
    </location>
</feature>
<feature type="splice variant" id="VSP_036505" description="In isoform 2." evidence="4">
    <original>CKDLVMFV</original>
    <variation>S</variation>
    <location>
        <begin position="232"/>
        <end position="239"/>
    </location>
</feature>
<feature type="sequence conflict" description="In Ref. 2; AAH61727." evidence="5" ref="2">
    <original>E</original>
    <variation>K</variation>
    <location>
        <position position="14"/>
    </location>
</feature>
<evidence type="ECO:0000250" key="1">
    <source>
        <dbReference type="UniProtKB" id="P54819"/>
    </source>
</evidence>
<evidence type="ECO:0000250" key="2">
    <source>
        <dbReference type="UniProtKB" id="Q9WTP6"/>
    </source>
</evidence>
<evidence type="ECO:0000255" key="3">
    <source>
        <dbReference type="HAMAP-Rule" id="MF_03168"/>
    </source>
</evidence>
<evidence type="ECO:0000303" key="4">
    <source>
    </source>
</evidence>
<evidence type="ECO:0000305" key="5"/>
<dbReference type="EC" id="2.7.4.3" evidence="3"/>
<dbReference type="EMBL" id="D13061">
    <property type="protein sequence ID" value="BAA02378.1"/>
    <property type="molecule type" value="mRNA"/>
</dbReference>
<dbReference type="EMBL" id="BC061727">
    <property type="protein sequence ID" value="AAH61727.1"/>
    <property type="molecule type" value="mRNA"/>
</dbReference>
<dbReference type="PIR" id="JQ1944">
    <property type="entry name" value="JQ1944"/>
</dbReference>
<dbReference type="RefSeq" id="NP_001029139.1">
    <property type="nucleotide sequence ID" value="NM_001033967.2"/>
</dbReference>
<dbReference type="SMR" id="P29410"/>
<dbReference type="FunCoup" id="P29410">
    <property type="interactions" value="2373"/>
</dbReference>
<dbReference type="STRING" id="10116.ENSRNOP00000000134"/>
<dbReference type="BindingDB" id="P29410"/>
<dbReference type="ChEMBL" id="CHEMBL2376"/>
<dbReference type="DrugCentral" id="P29410"/>
<dbReference type="iPTMnet" id="P29410"/>
<dbReference type="PhosphoSitePlus" id="P29410"/>
<dbReference type="SwissPalm" id="P29410"/>
<dbReference type="jPOST" id="P29410"/>
<dbReference type="PaxDb" id="10116-ENSRNOP00000000134"/>
<dbReference type="GeneID" id="24184"/>
<dbReference type="KEGG" id="rno:24184"/>
<dbReference type="AGR" id="RGD:2077"/>
<dbReference type="CTD" id="204"/>
<dbReference type="RGD" id="2077">
    <property type="gene designation" value="Ak2"/>
</dbReference>
<dbReference type="eggNOG" id="KOG3078">
    <property type="taxonomic scope" value="Eukaryota"/>
</dbReference>
<dbReference type="InParanoid" id="P29410"/>
<dbReference type="OrthoDB" id="439792at2759"/>
<dbReference type="PhylomeDB" id="P29410"/>
<dbReference type="TreeFam" id="TF300896"/>
<dbReference type="Reactome" id="R-RNO-499943">
    <property type="pathway name" value="Interconversion of nucleotide di- and triphosphates"/>
</dbReference>
<dbReference type="PRO" id="PR:P29410"/>
<dbReference type="Proteomes" id="UP000002494">
    <property type="component" value="Unplaced"/>
</dbReference>
<dbReference type="GO" id="GO:0005737">
    <property type="term" value="C:cytoplasm"/>
    <property type="evidence" value="ECO:0000318"/>
    <property type="project" value="GO_Central"/>
</dbReference>
<dbReference type="GO" id="GO:0005758">
    <property type="term" value="C:mitochondrial intermembrane space"/>
    <property type="evidence" value="ECO:0007669"/>
    <property type="project" value="UniProtKB-SubCell"/>
</dbReference>
<dbReference type="GO" id="GO:0005739">
    <property type="term" value="C:mitochondrion"/>
    <property type="evidence" value="ECO:0000318"/>
    <property type="project" value="GO_Central"/>
</dbReference>
<dbReference type="GO" id="GO:0036126">
    <property type="term" value="C:sperm flagellum"/>
    <property type="evidence" value="ECO:0000266"/>
    <property type="project" value="RGD"/>
</dbReference>
<dbReference type="GO" id="GO:0097226">
    <property type="term" value="C:sperm mitochondrial sheath"/>
    <property type="evidence" value="ECO:0000266"/>
    <property type="project" value="RGD"/>
</dbReference>
<dbReference type="GO" id="GO:0004017">
    <property type="term" value="F:adenylate kinase activity"/>
    <property type="evidence" value="ECO:0000314"/>
    <property type="project" value="RGD"/>
</dbReference>
<dbReference type="GO" id="GO:0005524">
    <property type="term" value="F:ATP binding"/>
    <property type="evidence" value="ECO:0007669"/>
    <property type="project" value="UniProtKB-KW"/>
</dbReference>
<dbReference type="GO" id="GO:0046083">
    <property type="term" value="P:adenine metabolic process"/>
    <property type="evidence" value="ECO:0000304"/>
    <property type="project" value="RGD"/>
</dbReference>
<dbReference type="GO" id="GO:0006172">
    <property type="term" value="P:ADP biosynthetic process"/>
    <property type="evidence" value="ECO:0000314"/>
    <property type="project" value="RGD"/>
</dbReference>
<dbReference type="GO" id="GO:0046033">
    <property type="term" value="P:AMP metabolic process"/>
    <property type="evidence" value="ECO:0000314"/>
    <property type="project" value="RGD"/>
</dbReference>
<dbReference type="GO" id="GO:0046034">
    <property type="term" value="P:ATP metabolic process"/>
    <property type="evidence" value="ECO:0007669"/>
    <property type="project" value="UniProtKB-UniRule"/>
</dbReference>
<dbReference type="GO" id="GO:0046060">
    <property type="term" value="P:dATP metabolic process"/>
    <property type="evidence" value="ECO:0000314"/>
    <property type="project" value="RGD"/>
</dbReference>
<dbReference type="GO" id="GO:0001889">
    <property type="term" value="P:liver development"/>
    <property type="evidence" value="ECO:0000270"/>
    <property type="project" value="RGD"/>
</dbReference>
<dbReference type="GO" id="GO:0006119">
    <property type="term" value="P:oxidative phosphorylation"/>
    <property type="evidence" value="ECO:0000270"/>
    <property type="project" value="RGD"/>
</dbReference>
<dbReference type="GO" id="GO:0097066">
    <property type="term" value="P:response to thyroid hormone"/>
    <property type="evidence" value="ECO:0000270"/>
    <property type="project" value="RGD"/>
</dbReference>
<dbReference type="CDD" id="cd01428">
    <property type="entry name" value="ADK"/>
    <property type="match status" value="1"/>
</dbReference>
<dbReference type="FunFam" id="3.40.50.300:FF:000106">
    <property type="entry name" value="Adenylate kinase mitochondrial"/>
    <property type="match status" value="1"/>
</dbReference>
<dbReference type="Gene3D" id="3.40.50.300">
    <property type="entry name" value="P-loop containing nucleotide triphosphate hydrolases"/>
    <property type="match status" value="1"/>
</dbReference>
<dbReference type="HAMAP" id="MF_00235">
    <property type="entry name" value="Adenylate_kinase_Adk"/>
    <property type="match status" value="1"/>
</dbReference>
<dbReference type="HAMAP" id="MF_03168">
    <property type="entry name" value="Adenylate_kinase_AK2"/>
    <property type="match status" value="1"/>
</dbReference>
<dbReference type="InterPro" id="IPR006259">
    <property type="entry name" value="Adenyl_kin_sub"/>
</dbReference>
<dbReference type="InterPro" id="IPR000850">
    <property type="entry name" value="Adenylat/UMP-CMP_kin"/>
</dbReference>
<dbReference type="InterPro" id="IPR033690">
    <property type="entry name" value="Adenylat_kinase_CS"/>
</dbReference>
<dbReference type="InterPro" id="IPR007862">
    <property type="entry name" value="Adenylate_kinase_lid-dom"/>
</dbReference>
<dbReference type="InterPro" id="IPR028587">
    <property type="entry name" value="AK2"/>
</dbReference>
<dbReference type="InterPro" id="IPR027417">
    <property type="entry name" value="P-loop_NTPase"/>
</dbReference>
<dbReference type="NCBIfam" id="TIGR01351">
    <property type="entry name" value="adk"/>
    <property type="match status" value="1"/>
</dbReference>
<dbReference type="NCBIfam" id="NF001380">
    <property type="entry name" value="PRK00279.1-2"/>
    <property type="match status" value="1"/>
</dbReference>
<dbReference type="NCBIfam" id="NF001381">
    <property type="entry name" value="PRK00279.1-3"/>
    <property type="match status" value="1"/>
</dbReference>
<dbReference type="NCBIfam" id="NF011100">
    <property type="entry name" value="PRK14527.1"/>
    <property type="match status" value="1"/>
</dbReference>
<dbReference type="PANTHER" id="PTHR23359">
    <property type="entry name" value="NUCLEOTIDE KINASE"/>
    <property type="match status" value="1"/>
</dbReference>
<dbReference type="Pfam" id="PF00406">
    <property type="entry name" value="ADK"/>
    <property type="match status" value="1"/>
</dbReference>
<dbReference type="Pfam" id="PF05191">
    <property type="entry name" value="ADK_lid"/>
    <property type="match status" value="1"/>
</dbReference>
<dbReference type="PRINTS" id="PR00094">
    <property type="entry name" value="ADENYLTKNASE"/>
</dbReference>
<dbReference type="SUPFAM" id="SSF52540">
    <property type="entry name" value="P-loop containing nucleoside triphosphate hydrolases"/>
    <property type="match status" value="1"/>
</dbReference>
<dbReference type="PROSITE" id="PS00113">
    <property type="entry name" value="ADENYLATE_KINASE"/>
    <property type="match status" value="1"/>
</dbReference>
<accession>P29410</accession>
<accession>Q6P7C6</accession>
<sequence>MAPNALAPEPEHPEGIRAVLLGPPGAGKGTQAPKLAENFCVCHLATGDMLRAMVASGSELGKKLKATMDAGKLVSDEMVVELIEKNLETPSCKNGFLLDGFPRTVKQAEMLDDLMDKRKEKLDSVIEFSIQDSLLIRRITGRLIHPKSGRSYHEEFNPPKEAMKDDITGEPLIRRSDDNEKALKTRLEAYHTQTTPLVEYYRKRGIHCAIDASQTPDVVFASILAAFSKATCKDLVMFV</sequence>
<organism>
    <name type="scientific">Rattus norvegicus</name>
    <name type="common">Rat</name>
    <dbReference type="NCBI Taxonomy" id="10116"/>
    <lineage>
        <taxon>Eukaryota</taxon>
        <taxon>Metazoa</taxon>
        <taxon>Chordata</taxon>
        <taxon>Craniata</taxon>
        <taxon>Vertebrata</taxon>
        <taxon>Euteleostomi</taxon>
        <taxon>Mammalia</taxon>
        <taxon>Eutheria</taxon>
        <taxon>Euarchontoglires</taxon>
        <taxon>Glires</taxon>
        <taxon>Rodentia</taxon>
        <taxon>Myomorpha</taxon>
        <taxon>Muroidea</taxon>
        <taxon>Muridae</taxon>
        <taxon>Murinae</taxon>
        <taxon>Rattus</taxon>
    </lineage>
</organism>
<protein>
    <recommendedName>
        <fullName evidence="3">Adenylate kinase 2, mitochondrial</fullName>
        <shortName evidence="3">AK 2</shortName>
        <ecNumber evidence="3">2.7.4.3</ecNumber>
    </recommendedName>
    <alternativeName>
        <fullName evidence="3">ATP-AMP transphosphorylase 2</fullName>
    </alternativeName>
    <alternativeName>
        <fullName evidence="3">ATP:AMP phosphotransferase</fullName>
    </alternativeName>
    <alternativeName>
        <fullName evidence="3">Adenylate monophosphate kinase</fullName>
    </alternativeName>
</protein>
<reference key="1">
    <citation type="journal article" date="1993" name="J. Biochem.">
        <title>Tissue-specific and developmentally regulated expression of the genes encoding adenylate kinase isozymes.</title>
        <authorList>
            <person name="Tanabe T."/>
            <person name="Yamada M."/>
            <person name="Noma T."/>
            <person name="Kajii T."/>
            <person name="Nakazawa A."/>
        </authorList>
    </citation>
    <scope>NUCLEOTIDE SEQUENCE [MRNA] (ISOFORM 1)</scope>
</reference>
<reference key="2">
    <citation type="journal article" date="2004" name="Genome Res.">
        <title>The status, quality, and expansion of the NIH full-length cDNA project: the Mammalian Gene Collection (MGC).</title>
        <authorList>
            <consortium name="The MGC Project Team"/>
        </authorList>
    </citation>
    <scope>NUCLEOTIDE SEQUENCE [LARGE SCALE MRNA] (ISOFORM 2)</scope>
    <source>
        <tissue>Prostate</tissue>
    </source>
</reference>
<proteinExistence type="evidence at transcript level"/>
<gene>
    <name type="primary">Ak2</name>
</gene>
<comment type="function">
    <text evidence="3">Catalyzes the reversible transfer of the terminal phosphate group between ATP and AMP. Plays an important role in cellular energy homeostasis and in adenine nucleotide metabolism. Adenylate kinase activity is critical for regulation of the phosphate utilization and the AMP de novo biosynthesis pathways. Plays a key role in hematopoiesis.</text>
</comment>
<comment type="catalytic activity">
    <reaction evidence="3">
        <text>AMP + ATP = 2 ADP</text>
        <dbReference type="Rhea" id="RHEA:12973"/>
        <dbReference type="ChEBI" id="CHEBI:30616"/>
        <dbReference type="ChEBI" id="CHEBI:456215"/>
        <dbReference type="ChEBI" id="CHEBI:456216"/>
        <dbReference type="EC" id="2.7.4.3"/>
    </reaction>
</comment>
<comment type="subunit">
    <text evidence="3">Monomer.</text>
</comment>
<comment type="subcellular location">
    <subcellularLocation>
        <location evidence="3">Mitochondrion intermembrane space</location>
    </subcellularLocation>
</comment>
<comment type="alternative products">
    <event type="alternative splicing"/>
    <isoform>
        <id>P29410-1</id>
        <name>1</name>
        <sequence type="displayed"/>
    </isoform>
    <isoform>
        <id>P29410-2</id>
        <name>2</name>
        <sequence type="described" ref="VSP_036505"/>
    </isoform>
</comment>
<comment type="domain">
    <text evidence="3">Consists of three domains, a large central CORE domain and two small peripheral domains, NMPbind and LID, which undergo movements during catalysis. The LID domain closes over the site of phosphoryl transfer upon ATP binding. Assembling and dissambling the active center during each catalytic cycle provides an effective means to prevent ATP hydrolysis.</text>
</comment>
<comment type="similarity">
    <text evidence="3">Belongs to the adenylate kinase family. AK2 subfamily.</text>
</comment>
<name>KAD2_RAT</name>
<keyword id="KW-0007">Acetylation</keyword>
<keyword id="KW-0025">Alternative splicing</keyword>
<keyword id="KW-0067">ATP-binding</keyword>
<keyword id="KW-1015">Disulfide bond</keyword>
<keyword id="KW-0418">Kinase</keyword>
<keyword id="KW-0496">Mitochondrion</keyword>
<keyword id="KW-0547">Nucleotide-binding</keyword>
<keyword id="KW-0597">Phosphoprotein</keyword>
<keyword id="KW-1185">Reference proteome</keyword>
<keyword id="KW-0808">Transferase</keyword>